<sequence length="681" mass="78017">MSMSNPLLNIQGLPPFSQIKPEHIRPAVEKLIQDCRNTIEQVLKQPHFTWENFILPLTETNDRLNRAWSPVSHLNSVKNSTELREAYQTCLPLLSEYSTWVGQHKGLYNAYLALKNSAEFADYSIAQKKAIENSLRDFELSGIGLSEEKQQRYGEIVARLSELNSQFSNNVLDATMGWEKLIENEAELAGLPESALQAAQQSAESKGLKGYRFTLEIPSYLPVMTYCENRALREEMYRAYATRASEQGPNAGKWDNSKVMEEILTLRVELAKLLGFNTYTELSLATKMAENPQQVLDFLDHLAERAKPQGEKELQELKGYCEKEFGVTELAPWDIGFYSEKQKQHLYAINDEELRPYFPENRVISGLFELIKRIFNIRAVERKGVDTWHKDVRFFDLIDENDQLRGSFYLDLYAREHKRGGAWMDDCIGRKRKLDGSIETPVAYLTCNFNAPIGNKPALFTHNEVTTLFHEFGHGIHHMLTQIDVSDVAGINGVPWDAVELPSQFMENWCWEEEALAFISGHYETGEPLPKEKLTQLLKAKNFQAAMFILRQLEFGIFDFRLHHTFDAEKTNQILDTLKSVKSQVAVIKGVDWARAPHSFSHIFAGGYAAGYYSYLWAEVLSADAYSRFEEEGIFNPITGKSFLDEILTRGGSEEPMELFKRFRGREPQLDALLRHKGIMN</sequence>
<accession>P44573</accession>
<name>OPDA_HAEIN</name>
<evidence type="ECO:0000250" key="1"/>
<evidence type="ECO:0000255" key="2">
    <source>
        <dbReference type="PROSITE-ProRule" id="PRU10095"/>
    </source>
</evidence>
<evidence type="ECO:0000305" key="3"/>
<dbReference type="EC" id="3.4.24.70"/>
<dbReference type="EMBL" id="L42023">
    <property type="protein sequence ID" value="AAC21882.1"/>
    <property type="molecule type" value="Genomic_DNA"/>
</dbReference>
<dbReference type="PIR" id="C64055">
    <property type="entry name" value="C64055"/>
</dbReference>
<dbReference type="RefSeq" id="NP_438383.2">
    <property type="nucleotide sequence ID" value="NC_000907.1"/>
</dbReference>
<dbReference type="SMR" id="P44573"/>
<dbReference type="STRING" id="71421.HI_0214"/>
<dbReference type="MEROPS" id="M03.004"/>
<dbReference type="EnsemblBacteria" id="AAC21882">
    <property type="protein sequence ID" value="AAC21882"/>
    <property type="gene ID" value="HI_0214"/>
</dbReference>
<dbReference type="KEGG" id="hin:HI_0214"/>
<dbReference type="PATRIC" id="fig|71421.8.peg.219"/>
<dbReference type="eggNOG" id="COG0339">
    <property type="taxonomic scope" value="Bacteria"/>
</dbReference>
<dbReference type="HOGENOM" id="CLU_001805_4_1_6"/>
<dbReference type="OrthoDB" id="9773538at2"/>
<dbReference type="PhylomeDB" id="P44573"/>
<dbReference type="Proteomes" id="UP000000579">
    <property type="component" value="Chromosome"/>
</dbReference>
<dbReference type="GO" id="GO:0046872">
    <property type="term" value="F:metal ion binding"/>
    <property type="evidence" value="ECO:0007669"/>
    <property type="project" value="UniProtKB-KW"/>
</dbReference>
<dbReference type="GO" id="GO:0004222">
    <property type="term" value="F:metalloendopeptidase activity"/>
    <property type="evidence" value="ECO:0000318"/>
    <property type="project" value="GO_Central"/>
</dbReference>
<dbReference type="GO" id="GO:0006518">
    <property type="term" value="P:peptide metabolic process"/>
    <property type="evidence" value="ECO:0000318"/>
    <property type="project" value="GO_Central"/>
</dbReference>
<dbReference type="GO" id="GO:0006508">
    <property type="term" value="P:proteolysis"/>
    <property type="evidence" value="ECO:0000318"/>
    <property type="project" value="GO_Central"/>
</dbReference>
<dbReference type="CDD" id="cd06456">
    <property type="entry name" value="M3A_DCP"/>
    <property type="match status" value="1"/>
</dbReference>
<dbReference type="FunFam" id="1.20.1050.40:FF:000002">
    <property type="entry name" value="Oligopeptidase A"/>
    <property type="match status" value="1"/>
</dbReference>
<dbReference type="FunFam" id="3.40.390.10:FF:000009">
    <property type="entry name" value="Oligopeptidase A"/>
    <property type="match status" value="1"/>
</dbReference>
<dbReference type="Gene3D" id="3.40.390.10">
    <property type="entry name" value="Collagenase (Catalytic Domain)"/>
    <property type="match status" value="1"/>
</dbReference>
<dbReference type="Gene3D" id="1.20.1050.40">
    <property type="entry name" value="Endopeptidase. Chain P, domain 1"/>
    <property type="match status" value="1"/>
</dbReference>
<dbReference type="Gene3D" id="1.10.1370.10">
    <property type="entry name" value="Neurolysin, domain 3"/>
    <property type="match status" value="1"/>
</dbReference>
<dbReference type="InterPro" id="IPR034005">
    <property type="entry name" value="M3A_DCP"/>
</dbReference>
<dbReference type="InterPro" id="IPR024079">
    <property type="entry name" value="MetalloPept_cat_dom_sf"/>
</dbReference>
<dbReference type="InterPro" id="IPR024077">
    <property type="entry name" value="Neurolysin/TOP_dom2"/>
</dbReference>
<dbReference type="InterPro" id="IPR024080">
    <property type="entry name" value="Neurolysin/TOP_N"/>
</dbReference>
<dbReference type="InterPro" id="IPR045666">
    <property type="entry name" value="OpdA_N"/>
</dbReference>
<dbReference type="InterPro" id="IPR045090">
    <property type="entry name" value="Pept_M3A_M3B"/>
</dbReference>
<dbReference type="InterPro" id="IPR001567">
    <property type="entry name" value="Pept_M3A_M3B_dom"/>
</dbReference>
<dbReference type="NCBIfam" id="NF008159">
    <property type="entry name" value="PRK10911.1"/>
    <property type="match status" value="1"/>
</dbReference>
<dbReference type="PANTHER" id="PTHR11804">
    <property type="entry name" value="PROTEASE M3 THIMET OLIGOPEPTIDASE-RELATED"/>
    <property type="match status" value="1"/>
</dbReference>
<dbReference type="PANTHER" id="PTHR11804:SF84">
    <property type="entry name" value="SACCHAROLYSIN"/>
    <property type="match status" value="1"/>
</dbReference>
<dbReference type="Pfam" id="PF01432">
    <property type="entry name" value="Peptidase_M3"/>
    <property type="match status" value="1"/>
</dbReference>
<dbReference type="Pfam" id="PF19310">
    <property type="entry name" value="TOP_N"/>
    <property type="match status" value="1"/>
</dbReference>
<dbReference type="SUPFAM" id="SSF55486">
    <property type="entry name" value="Metalloproteases ('zincins'), catalytic domain"/>
    <property type="match status" value="1"/>
</dbReference>
<dbReference type="PROSITE" id="PS00142">
    <property type="entry name" value="ZINC_PROTEASE"/>
    <property type="match status" value="1"/>
</dbReference>
<organism>
    <name type="scientific">Haemophilus influenzae (strain ATCC 51907 / DSM 11121 / KW20 / Rd)</name>
    <dbReference type="NCBI Taxonomy" id="71421"/>
    <lineage>
        <taxon>Bacteria</taxon>
        <taxon>Pseudomonadati</taxon>
        <taxon>Pseudomonadota</taxon>
        <taxon>Gammaproteobacteria</taxon>
        <taxon>Pasteurellales</taxon>
        <taxon>Pasteurellaceae</taxon>
        <taxon>Haemophilus</taxon>
    </lineage>
</organism>
<comment type="function">
    <text evidence="1">May play a specific role in the degradation of signal peptides after they are released from precursor forms of secreted proteins. Can cleave N-acetyl-L-Ala(4) (By similarity).</text>
</comment>
<comment type="catalytic activity">
    <reaction>
        <text>Hydrolysis of oligopeptides, with broad specificity. Gly or Ala commonly occur as P1 or P1' residues, but more distant residues are also important, as is shown by the fact that Z-Gly-Pro-Gly-|-Gly-Pro-Ala is cleaved, but not Z-(Gly)(5).</text>
        <dbReference type="EC" id="3.4.24.70"/>
    </reaction>
</comment>
<comment type="cofactor">
    <cofactor evidence="1">
        <name>Zn(2+)</name>
        <dbReference type="ChEBI" id="CHEBI:29105"/>
    </cofactor>
    <text evidence="1">Binds 1 zinc ion.</text>
</comment>
<comment type="similarity">
    <text evidence="3">Belongs to the peptidase M3 family.</text>
</comment>
<keyword id="KW-0378">Hydrolase</keyword>
<keyword id="KW-0479">Metal-binding</keyword>
<keyword id="KW-0482">Metalloprotease</keyword>
<keyword id="KW-0645">Protease</keyword>
<keyword id="KW-1185">Reference proteome</keyword>
<keyword id="KW-0862">Zinc</keyword>
<gene>
    <name type="primary">prlC</name>
    <name type="ordered locus">HI_0214</name>
</gene>
<reference key="1">
    <citation type="journal article" date="1995" name="Science">
        <title>Whole-genome random sequencing and assembly of Haemophilus influenzae Rd.</title>
        <authorList>
            <person name="Fleischmann R.D."/>
            <person name="Adams M.D."/>
            <person name="White O."/>
            <person name="Clayton R.A."/>
            <person name="Kirkness E.F."/>
            <person name="Kerlavage A.R."/>
            <person name="Bult C.J."/>
            <person name="Tomb J.-F."/>
            <person name="Dougherty B.A."/>
            <person name="Merrick J.M."/>
            <person name="McKenney K."/>
            <person name="Sutton G.G."/>
            <person name="FitzHugh W."/>
            <person name="Fields C.A."/>
            <person name="Gocayne J.D."/>
            <person name="Scott J.D."/>
            <person name="Shirley R."/>
            <person name="Liu L.-I."/>
            <person name="Glodek A."/>
            <person name="Kelley J.M."/>
            <person name="Weidman J.F."/>
            <person name="Phillips C.A."/>
            <person name="Spriggs T."/>
            <person name="Hedblom E."/>
            <person name="Cotton M.D."/>
            <person name="Utterback T.R."/>
            <person name="Hanna M.C."/>
            <person name="Nguyen D.T."/>
            <person name="Saudek D.M."/>
            <person name="Brandon R.C."/>
            <person name="Fine L.D."/>
            <person name="Fritchman J.L."/>
            <person name="Fuhrmann J.L."/>
            <person name="Geoghagen N.S.M."/>
            <person name="Gnehm C.L."/>
            <person name="McDonald L.A."/>
            <person name="Small K.V."/>
            <person name="Fraser C.M."/>
            <person name="Smith H.O."/>
            <person name="Venter J.C."/>
        </authorList>
    </citation>
    <scope>NUCLEOTIDE SEQUENCE [LARGE SCALE GENOMIC DNA]</scope>
    <source>
        <strain>ATCC 51907 / DSM 11121 / KW20 / Rd</strain>
    </source>
</reference>
<proteinExistence type="inferred from homology"/>
<feature type="chain" id="PRO_0000078161" description="Oligopeptidase A">
    <location>
        <begin position="1"/>
        <end position="681"/>
    </location>
</feature>
<feature type="active site" evidence="2">
    <location>
        <position position="471"/>
    </location>
</feature>
<feature type="binding site" evidence="2">
    <location>
        <position position="470"/>
    </location>
    <ligand>
        <name>Zn(2+)</name>
        <dbReference type="ChEBI" id="CHEBI:29105"/>
        <note>catalytic</note>
    </ligand>
</feature>
<feature type="binding site" evidence="2">
    <location>
        <position position="474"/>
    </location>
    <ligand>
        <name>Zn(2+)</name>
        <dbReference type="ChEBI" id="CHEBI:29105"/>
        <note>catalytic</note>
    </ligand>
</feature>
<feature type="binding site" evidence="2">
    <location>
        <position position="477"/>
    </location>
    <ligand>
        <name>Zn(2+)</name>
        <dbReference type="ChEBI" id="CHEBI:29105"/>
        <note>catalytic</note>
    </ligand>
</feature>
<protein>
    <recommendedName>
        <fullName>Oligopeptidase A</fullName>
        <ecNumber>3.4.24.70</ecNumber>
    </recommendedName>
</protein>